<evidence type="ECO:0000255" key="1">
    <source>
        <dbReference type="HAMAP-Rule" id="MF_01690"/>
    </source>
</evidence>
<proteinExistence type="inferred from homology"/>
<gene>
    <name evidence="1" type="primary">dapE2</name>
    <name type="ordered locus">MADE_1007790</name>
</gene>
<keyword id="KW-0028">Amino-acid biosynthesis</keyword>
<keyword id="KW-0170">Cobalt</keyword>
<keyword id="KW-0220">Diaminopimelate biosynthesis</keyword>
<keyword id="KW-0378">Hydrolase</keyword>
<keyword id="KW-0457">Lysine biosynthesis</keyword>
<keyword id="KW-0479">Metal-binding</keyword>
<keyword id="KW-0862">Zinc</keyword>
<sequence>MLNDSVIDIAKQLINRRSVTPEDAGCQEAMCEFLGALGFDNETMVFEDTTNLWSRRGKEGPVFCFAGHTDVVPSGPEDAWKTPPFTATEVNGYLHGRGAADMKGSLAAMLVATREFVNQYPQHKGSIAYLITSDEEGPFINGTTRVIDTLEARNEKIDWCIVGEPSSTDEVGDIVKNGRRGSLTGDLVVKGVQGHVAYPHLAKNPVHSAMAALDELAKSHWDNGNDFFPPTSFQISNIHAGTGAGNVIPGELHVCFNFRFSTEVTDQILIERVTTILDAHELDYDIKWTFNGQPFLTDTGALLDATQGAIEAVKGTPTVLSTAGGTSDGRFIAPTGAQVIELGPVNATIHKIDECVKMADLEQLADMYFGILERLLAN</sequence>
<feature type="chain" id="PRO_0000375462" description="Succinyl-diaminopimelate desuccinylase 2">
    <location>
        <begin position="1"/>
        <end position="378"/>
    </location>
</feature>
<feature type="active site" evidence="1">
    <location>
        <position position="70"/>
    </location>
</feature>
<feature type="active site" description="Proton acceptor" evidence="1">
    <location>
        <position position="135"/>
    </location>
</feature>
<feature type="binding site" evidence="1">
    <location>
        <position position="68"/>
    </location>
    <ligand>
        <name>Zn(2+)</name>
        <dbReference type="ChEBI" id="CHEBI:29105"/>
        <label>1</label>
    </ligand>
</feature>
<feature type="binding site" evidence="1">
    <location>
        <position position="101"/>
    </location>
    <ligand>
        <name>Zn(2+)</name>
        <dbReference type="ChEBI" id="CHEBI:29105"/>
        <label>1</label>
    </ligand>
</feature>
<feature type="binding site" evidence="1">
    <location>
        <position position="101"/>
    </location>
    <ligand>
        <name>Zn(2+)</name>
        <dbReference type="ChEBI" id="CHEBI:29105"/>
        <label>2</label>
    </ligand>
</feature>
<feature type="binding site" evidence="1">
    <location>
        <position position="136"/>
    </location>
    <ligand>
        <name>Zn(2+)</name>
        <dbReference type="ChEBI" id="CHEBI:29105"/>
        <label>2</label>
    </ligand>
</feature>
<feature type="binding site" evidence="1">
    <location>
        <position position="164"/>
    </location>
    <ligand>
        <name>Zn(2+)</name>
        <dbReference type="ChEBI" id="CHEBI:29105"/>
        <label>1</label>
    </ligand>
</feature>
<feature type="binding site" evidence="1">
    <location>
        <position position="350"/>
    </location>
    <ligand>
        <name>Zn(2+)</name>
        <dbReference type="ChEBI" id="CHEBI:29105"/>
        <label>2</label>
    </ligand>
</feature>
<protein>
    <recommendedName>
        <fullName evidence="1">Succinyl-diaminopimelate desuccinylase 2</fullName>
        <shortName evidence="1">SDAP desuccinylase 2</shortName>
        <ecNumber evidence="1">3.5.1.18</ecNumber>
    </recommendedName>
    <alternativeName>
        <fullName evidence="1">N-succinyl-LL-2,6-diaminoheptanedioate amidohydrolase 2</fullName>
    </alternativeName>
</protein>
<organism>
    <name type="scientific">Alteromonas mediterranea (strain DSM 17117 / CIP 110805 / LMG 28347 / Deep ecotype)</name>
    <dbReference type="NCBI Taxonomy" id="1774373"/>
    <lineage>
        <taxon>Bacteria</taxon>
        <taxon>Pseudomonadati</taxon>
        <taxon>Pseudomonadota</taxon>
        <taxon>Gammaproteobacteria</taxon>
        <taxon>Alteromonadales</taxon>
        <taxon>Alteromonadaceae</taxon>
        <taxon>Alteromonas/Salinimonas group</taxon>
        <taxon>Alteromonas</taxon>
    </lineage>
</organism>
<dbReference type="EC" id="3.5.1.18" evidence="1"/>
<dbReference type="EMBL" id="CP001103">
    <property type="protein sequence ID" value="AEA97698.1"/>
    <property type="molecule type" value="Genomic_DNA"/>
</dbReference>
<dbReference type="SMR" id="B4RSS7"/>
<dbReference type="KEGG" id="amc:MADE_1007790"/>
<dbReference type="HOGENOM" id="CLU_021802_4_0_6"/>
<dbReference type="UniPathway" id="UPA00034">
    <property type="reaction ID" value="UER00021"/>
</dbReference>
<dbReference type="Proteomes" id="UP000001870">
    <property type="component" value="Chromosome"/>
</dbReference>
<dbReference type="GO" id="GO:0008777">
    <property type="term" value="F:acetylornithine deacetylase activity"/>
    <property type="evidence" value="ECO:0007669"/>
    <property type="project" value="TreeGrafter"/>
</dbReference>
<dbReference type="GO" id="GO:0050897">
    <property type="term" value="F:cobalt ion binding"/>
    <property type="evidence" value="ECO:0007669"/>
    <property type="project" value="UniProtKB-UniRule"/>
</dbReference>
<dbReference type="GO" id="GO:0009014">
    <property type="term" value="F:succinyl-diaminopimelate desuccinylase activity"/>
    <property type="evidence" value="ECO:0007669"/>
    <property type="project" value="UniProtKB-UniRule"/>
</dbReference>
<dbReference type="GO" id="GO:0008270">
    <property type="term" value="F:zinc ion binding"/>
    <property type="evidence" value="ECO:0007669"/>
    <property type="project" value="UniProtKB-UniRule"/>
</dbReference>
<dbReference type="GO" id="GO:0019877">
    <property type="term" value="P:diaminopimelate biosynthetic process"/>
    <property type="evidence" value="ECO:0007669"/>
    <property type="project" value="UniProtKB-UniRule"/>
</dbReference>
<dbReference type="GO" id="GO:0006526">
    <property type="term" value="P:L-arginine biosynthetic process"/>
    <property type="evidence" value="ECO:0007669"/>
    <property type="project" value="TreeGrafter"/>
</dbReference>
<dbReference type="GO" id="GO:0009089">
    <property type="term" value="P:lysine biosynthetic process via diaminopimelate"/>
    <property type="evidence" value="ECO:0007669"/>
    <property type="project" value="UniProtKB-UniRule"/>
</dbReference>
<dbReference type="CDD" id="cd03891">
    <property type="entry name" value="M20_DapE_proteobac"/>
    <property type="match status" value="1"/>
</dbReference>
<dbReference type="FunFam" id="3.30.70.360:FF:000011">
    <property type="entry name" value="Succinyl-diaminopimelate desuccinylase"/>
    <property type="match status" value="1"/>
</dbReference>
<dbReference type="FunFam" id="3.40.630.10:FF:000005">
    <property type="entry name" value="Succinyl-diaminopimelate desuccinylase"/>
    <property type="match status" value="1"/>
</dbReference>
<dbReference type="Gene3D" id="3.40.630.10">
    <property type="entry name" value="Zn peptidases"/>
    <property type="match status" value="2"/>
</dbReference>
<dbReference type="HAMAP" id="MF_01690">
    <property type="entry name" value="DapE"/>
    <property type="match status" value="1"/>
</dbReference>
<dbReference type="InterPro" id="IPR036264">
    <property type="entry name" value="Bact_exopeptidase_dim_dom"/>
</dbReference>
<dbReference type="InterPro" id="IPR005941">
    <property type="entry name" value="DapE_proteobac"/>
</dbReference>
<dbReference type="InterPro" id="IPR002933">
    <property type="entry name" value="Peptidase_M20"/>
</dbReference>
<dbReference type="InterPro" id="IPR011650">
    <property type="entry name" value="Peptidase_M20_dimer"/>
</dbReference>
<dbReference type="InterPro" id="IPR050072">
    <property type="entry name" value="Peptidase_M20A"/>
</dbReference>
<dbReference type="NCBIfam" id="TIGR01246">
    <property type="entry name" value="dapE_proteo"/>
    <property type="match status" value="1"/>
</dbReference>
<dbReference type="NCBIfam" id="NF009557">
    <property type="entry name" value="PRK13009.1"/>
    <property type="match status" value="1"/>
</dbReference>
<dbReference type="PANTHER" id="PTHR43808">
    <property type="entry name" value="ACETYLORNITHINE DEACETYLASE"/>
    <property type="match status" value="1"/>
</dbReference>
<dbReference type="PANTHER" id="PTHR43808:SF31">
    <property type="entry name" value="N-ACETYL-L-CITRULLINE DEACETYLASE"/>
    <property type="match status" value="1"/>
</dbReference>
<dbReference type="Pfam" id="PF07687">
    <property type="entry name" value="M20_dimer"/>
    <property type="match status" value="1"/>
</dbReference>
<dbReference type="Pfam" id="PF01546">
    <property type="entry name" value="Peptidase_M20"/>
    <property type="match status" value="1"/>
</dbReference>
<dbReference type="SUPFAM" id="SSF55031">
    <property type="entry name" value="Bacterial exopeptidase dimerisation domain"/>
    <property type="match status" value="1"/>
</dbReference>
<dbReference type="SUPFAM" id="SSF53187">
    <property type="entry name" value="Zn-dependent exopeptidases"/>
    <property type="match status" value="1"/>
</dbReference>
<comment type="function">
    <text evidence="1">Catalyzes the hydrolysis of N-succinyl-L,L-diaminopimelic acid (SDAP), forming succinate and LL-2,6-diaminopimelate (DAP), an intermediate involved in the bacterial biosynthesis of lysine and meso-diaminopimelic acid, an essential component of bacterial cell walls.</text>
</comment>
<comment type="catalytic activity">
    <reaction evidence="1">
        <text>N-succinyl-(2S,6S)-2,6-diaminopimelate + H2O = (2S,6S)-2,6-diaminopimelate + succinate</text>
        <dbReference type="Rhea" id="RHEA:22608"/>
        <dbReference type="ChEBI" id="CHEBI:15377"/>
        <dbReference type="ChEBI" id="CHEBI:30031"/>
        <dbReference type="ChEBI" id="CHEBI:57609"/>
        <dbReference type="ChEBI" id="CHEBI:58087"/>
        <dbReference type="EC" id="3.5.1.18"/>
    </reaction>
</comment>
<comment type="cofactor">
    <cofactor evidence="1">
        <name>Zn(2+)</name>
        <dbReference type="ChEBI" id="CHEBI:29105"/>
    </cofactor>
    <cofactor evidence="1">
        <name>Co(2+)</name>
        <dbReference type="ChEBI" id="CHEBI:48828"/>
    </cofactor>
    <text evidence="1">Binds 2 Zn(2+) or Co(2+) ions per subunit.</text>
</comment>
<comment type="pathway">
    <text evidence="1">Amino-acid biosynthesis; L-lysine biosynthesis via DAP pathway; LL-2,6-diaminopimelate from (S)-tetrahydrodipicolinate (succinylase route): step 3/3.</text>
</comment>
<comment type="subunit">
    <text evidence="1">Homodimer.</text>
</comment>
<comment type="similarity">
    <text evidence="1">Belongs to the peptidase M20A family. DapE subfamily.</text>
</comment>
<reference key="1">
    <citation type="journal article" date="2008" name="ISME J.">
        <title>Comparative genomics of two ecotypes of the marine planktonic copiotroph Alteromonas macleodii suggests alternative lifestyles associated with different kinds of particulate organic matter.</title>
        <authorList>
            <person name="Ivars-Martinez E."/>
            <person name="Martin-Cuadrado A.-B."/>
            <person name="D'Auria G."/>
            <person name="Mira A."/>
            <person name="Ferriera S."/>
            <person name="Johnson J."/>
            <person name="Friedman R."/>
            <person name="Rodriguez-Valera F."/>
        </authorList>
    </citation>
    <scope>NUCLEOTIDE SEQUENCE [LARGE SCALE GENOMIC DNA]</scope>
    <source>
        <strain>DSM 17117 / CIP 110805 / LMG 28347 / Deep ecotype</strain>
    </source>
</reference>
<name>DAPE2_ALTMD</name>
<accession>B4RSS7</accession>
<accession>F2G8C9</accession>